<protein>
    <recommendedName>
        <fullName evidence="1">ATP synthase subunit beta</fullName>
        <ecNumber evidence="1">7.1.2.2</ecNumber>
    </recommendedName>
    <alternativeName>
        <fullName evidence="1">ATP synthase F1 sector subunit beta</fullName>
    </alternativeName>
    <alternativeName>
        <fullName evidence="1">F-ATPase subunit beta</fullName>
    </alternativeName>
</protein>
<organism>
    <name type="scientific">Renibacterium salmoninarum (strain ATCC 33209 / DSM 20767 / JCM 11484 / NBRC 15589 / NCIMB 2235)</name>
    <dbReference type="NCBI Taxonomy" id="288705"/>
    <lineage>
        <taxon>Bacteria</taxon>
        <taxon>Bacillati</taxon>
        <taxon>Actinomycetota</taxon>
        <taxon>Actinomycetes</taxon>
        <taxon>Micrococcales</taxon>
        <taxon>Micrococcaceae</taxon>
        <taxon>Renibacterium</taxon>
    </lineage>
</organism>
<keyword id="KW-0066">ATP synthesis</keyword>
<keyword id="KW-0067">ATP-binding</keyword>
<keyword id="KW-1003">Cell membrane</keyword>
<keyword id="KW-0139">CF(1)</keyword>
<keyword id="KW-0375">Hydrogen ion transport</keyword>
<keyword id="KW-0406">Ion transport</keyword>
<keyword id="KW-0472">Membrane</keyword>
<keyword id="KW-0547">Nucleotide-binding</keyword>
<keyword id="KW-1185">Reference proteome</keyword>
<keyword id="KW-1278">Translocase</keyword>
<keyword id="KW-0813">Transport</keyword>
<reference key="1">
    <citation type="journal article" date="2008" name="J. Bacteriol.">
        <title>Genome sequence of the fish pathogen Renibacterium salmoninarum suggests reductive evolution away from an environmental Arthrobacter ancestor.</title>
        <authorList>
            <person name="Wiens G.D."/>
            <person name="Rockey D.D."/>
            <person name="Wu Z."/>
            <person name="Chang J."/>
            <person name="Levy R."/>
            <person name="Crane S."/>
            <person name="Chen D.S."/>
            <person name="Capri G.R."/>
            <person name="Burnett J.R."/>
            <person name="Sudheesh P.S."/>
            <person name="Schipma M.J."/>
            <person name="Burd H."/>
            <person name="Bhattacharyya A."/>
            <person name="Rhodes L.D."/>
            <person name="Kaul R."/>
            <person name="Strom M.S."/>
        </authorList>
    </citation>
    <scope>NUCLEOTIDE SEQUENCE [LARGE SCALE GENOMIC DNA]</scope>
    <source>
        <strain>ATCC 33209 / DSM 20767 / JCM 11484 / NBRC 15589 / NCIMB 2235</strain>
    </source>
</reference>
<name>ATPB_RENSM</name>
<gene>
    <name evidence="1" type="primary">atpD</name>
    <name type="ordered locus">RSal33209_1448</name>
</gene>
<evidence type="ECO:0000255" key="1">
    <source>
        <dbReference type="HAMAP-Rule" id="MF_01347"/>
    </source>
</evidence>
<evidence type="ECO:0000305" key="2"/>
<sequence>MTATATEQGARTAAATGRIARVIGPVVDVEFPADAIPGIYHALTAEITLNGATHAVTFEVSQHLGDNLVRAISLQTTDGLVRGAVVTDTGAPISVPVGDGVKGHIFNVLGQPLDVAESEIQYTERWPIHRKPPSFDQLEGSTEMLETGIKSIDLLTPYIKGGKIGLFGGAGVGKTVLIQEMITRVARNFGGTSVFAGVGERTREGNDLWVEMEESGVLKDTALVFGQMDEPPGTRLRVALSALTMAEYFRDVQNQDVLLFIDNIFRFTQAGSEVSTLLGRMPSAVGYQPNLADEMGLLQERITSTKGRSITSMQAVYVPADDYTDPAPAATFAHLDATTELSREIASRGLYPAIDPLTSTSRILDPQYIGKDHYDTAVRVKQILQKNKELQDIIAVLGVDELSEEDKIVVSRARRIQQFLSQNTYTAKQFTGVEGSTVSIKDTVEGFTAICNGDVDHIAEQAFFNVGAMDDVERQWAKIQESTK</sequence>
<dbReference type="EC" id="7.1.2.2" evidence="1"/>
<dbReference type="EMBL" id="CP000910">
    <property type="protein sequence ID" value="ABY23184.1"/>
    <property type="status" value="ALT_INIT"/>
    <property type="molecule type" value="Genomic_DNA"/>
</dbReference>
<dbReference type="RefSeq" id="WP_041684542.1">
    <property type="nucleotide sequence ID" value="NC_010168.1"/>
</dbReference>
<dbReference type="SMR" id="A9WNC8"/>
<dbReference type="STRING" id="288705.RSal33209_1448"/>
<dbReference type="KEGG" id="rsa:RSal33209_1448"/>
<dbReference type="eggNOG" id="COG0055">
    <property type="taxonomic scope" value="Bacteria"/>
</dbReference>
<dbReference type="HOGENOM" id="CLU_022398_0_2_11"/>
<dbReference type="Proteomes" id="UP000002007">
    <property type="component" value="Chromosome"/>
</dbReference>
<dbReference type="GO" id="GO:0005886">
    <property type="term" value="C:plasma membrane"/>
    <property type="evidence" value="ECO:0007669"/>
    <property type="project" value="UniProtKB-SubCell"/>
</dbReference>
<dbReference type="GO" id="GO:0045259">
    <property type="term" value="C:proton-transporting ATP synthase complex"/>
    <property type="evidence" value="ECO:0007669"/>
    <property type="project" value="UniProtKB-KW"/>
</dbReference>
<dbReference type="GO" id="GO:0005524">
    <property type="term" value="F:ATP binding"/>
    <property type="evidence" value="ECO:0007669"/>
    <property type="project" value="UniProtKB-UniRule"/>
</dbReference>
<dbReference type="GO" id="GO:0016887">
    <property type="term" value="F:ATP hydrolysis activity"/>
    <property type="evidence" value="ECO:0007669"/>
    <property type="project" value="InterPro"/>
</dbReference>
<dbReference type="GO" id="GO:0046933">
    <property type="term" value="F:proton-transporting ATP synthase activity, rotational mechanism"/>
    <property type="evidence" value="ECO:0007669"/>
    <property type="project" value="UniProtKB-UniRule"/>
</dbReference>
<dbReference type="CDD" id="cd18110">
    <property type="entry name" value="ATP-synt_F1_beta_C"/>
    <property type="match status" value="1"/>
</dbReference>
<dbReference type="CDD" id="cd18115">
    <property type="entry name" value="ATP-synt_F1_beta_N"/>
    <property type="match status" value="1"/>
</dbReference>
<dbReference type="CDD" id="cd01133">
    <property type="entry name" value="F1-ATPase_beta_CD"/>
    <property type="match status" value="1"/>
</dbReference>
<dbReference type="FunFam" id="1.10.1140.10:FF:000005">
    <property type="entry name" value="ATP synthase subunit beta"/>
    <property type="match status" value="1"/>
</dbReference>
<dbReference type="FunFam" id="2.40.10.170:FF:000005">
    <property type="entry name" value="ATP synthase subunit beta"/>
    <property type="match status" value="1"/>
</dbReference>
<dbReference type="FunFam" id="3.40.50.300:FF:000004">
    <property type="entry name" value="ATP synthase subunit beta"/>
    <property type="match status" value="1"/>
</dbReference>
<dbReference type="Gene3D" id="2.40.10.170">
    <property type="match status" value="1"/>
</dbReference>
<dbReference type="Gene3D" id="1.10.1140.10">
    <property type="entry name" value="Bovine Mitochondrial F1-atpase, Atp Synthase Beta Chain, Chain D, domain 3"/>
    <property type="match status" value="1"/>
</dbReference>
<dbReference type="Gene3D" id="3.40.50.300">
    <property type="entry name" value="P-loop containing nucleotide triphosphate hydrolases"/>
    <property type="match status" value="1"/>
</dbReference>
<dbReference type="HAMAP" id="MF_01347">
    <property type="entry name" value="ATP_synth_beta_bact"/>
    <property type="match status" value="1"/>
</dbReference>
<dbReference type="InterPro" id="IPR003593">
    <property type="entry name" value="AAA+_ATPase"/>
</dbReference>
<dbReference type="InterPro" id="IPR055190">
    <property type="entry name" value="ATP-synt_VA_C"/>
</dbReference>
<dbReference type="InterPro" id="IPR005722">
    <property type="entry name" value="ATP_synth_F1_bsu"/>
</dbReference>
<dbReference type="InterPro" id="IPR020003">
    <property type="entry name" value="ATPase_a/bsu_AS"/>
</dbReference>
<dbReference type="InterPro" id="IPR050053">
    <property type="entry name" value="ATPase_alpha/beta_chains"/>
</dbReference>
<dbReference type="InterPro" id="IPR004100">
    <property type="entry name" value="ATPase_F1/V1/A1_a/bsu_N"/>
</dbReference>
<dbReference type="InterPro" id="IPR036121">
    <property type="entry name" value="ATPase_F1/V1/A1_a/bsu_N_sf"/>
</dbReference>
<dbReference type="InterPro" id="IPR000194">
    <property type="entry name" value="ATPase_F1/V1/A1_a/bsu_nucl-bd"/>
</dbReference>
<dbReference type="InterPro" id="IPR024034">
    <property type="entry name" value="ATPase_F1/V1_b/a_C"/>
</dbReference>
<dbReference type="InterPro" id="IPR027417">
    <property type="entry name" value="P-loop_NTPase"/>
</dbReference>
<dbReference type="NCBIfam" id="TIGR01039">
    <property type="entry name" value="atpD"/>
    <property type="match status" value="1"/>
</dbReference>
<dbReference type="PANTHER" id="PTHR15184">
    <property type="entry name" value="ATP SYNTHASE"/>
    <property type="match status" value="1"/>
</dbReference>
<dbReference type="PANTHER" id="PTHR15184:SF71">
    <property type="entry name" value="ATP SYNTHASE SUBUNIT BETA, MITOCHONDRIAL"/>
    <property type="match status" value="1"/>
</dbReference>
<dbReference type="Pfam" id="PF00006">
    <property type="entry name" value="ATP-synt_ab"/>
    <property type="match status" value="1"/>
</dbReference>
<dbReference type="Pfam" id="PF02874">
    <property type="entry name" value="ATP-synt_ab_N"/>
    <property type="match status" value="1"/>
</dbReference>
<dbReference type="Pfam" id="PF22919">
    <property type="entry name" value="ATP-synt_VA_C"/>
    <property type="match status" value="1"/>
</dbReference>
<dbReference type="SMART" id="SM00382">
    <property type="entry name" value="AAA"/>
    <property type="match status" value="1"/>
</dbReference>
<dbReference type="SUPFAM" id="SSF47917">
    <property type="entry name" value="C-terminal domain of alpha and beta subunits of F1 ATP synthase"/>
    <property type="match status" value="1"/>
</dbReference>
<dbReference type="SUPFAM" id="SSF50615">
    <property type="entry name" value="N-terminal domain of alpha and beta subunits of F1 ATP synthase"/>
    <property type="match status" value="1"/>
</dbReference>
<dbReference type="SUPFAM" id="SSF52540">
    <property type="entry name" value="P-loop containing nucleoside triphosphate hydrolases"/>
    <property type="match status" value="1"/>
</dbReference>
<dbReference type="PROSITE" id="PS00152">
    <property type="entry name" value="ATPASE_ALPHA_BETA"/>
    <property type="match status" value="1"/>
</dbReference>
<comment type="function">
    <text evidence="1">Produces ATP from ADP in the presence of a proton gradient across the membrane. The catalytic sites are hosted primarily by the beta subunits.</text>
</comment>
<comment type="catalytic activity">
    <reaction evidence="1">
        <text>ATP + H2O + 4 H(+)(in) = ADP + phosphate + 5 H(+)(out)</text>
        <dbReference type="Rhea" id="RHEA:57720"/>
        <dbReference type="ChEBI" id="CHEBI:15377"/>
        <dbReference type="ChEBI" id="CHEBI:15378"/>
        <dbReference type="ChEBI" id="CHEBI:30616"/>
        <dbReference type="ChEBI" id="CHEBI:43474"/>
        <dbReference type="ChEBI" id="CHEBI:456216"/>
        <dbReference type="EC" id="7.1.2.2"/>
    </reaction>
</comment>
<comment type="subunit">
    <text evidence="1">F-type ATPases have 2 components, CF(1) - the catalytic core - and CF(0) - the membrane proton channel. CF(1) has five subunits: alpha(3), beta(3), gamma(1), delta(1), epsilon(1). CF(0) has three main subunits: a(1), b(2) and c(9-12). The alpha and beta chains form an alternating ring which encloses part of the gamma chain. CF(1) is attached to CF(0) by a central stalk formed by the gamma and epsilon chains, while a peripheral stalk is formed by the delta and b chains.</text>
</comment>
<comment type="subcellular location">
    <subcellularLocation>
        <location evidence="1">Cell membrane</location>
        <topology evidence="1">Peripheral membrane protein</topology>
    </subcellularLocation>
</comment>
<comment type="similarity">
    <text evidence="1">Belongs to the ATPase alpha/beta chains family.</text>
</comment>
<comment type="sequence caution" evidence="2">
    <conflict type="erroneous initiation">
        <sequence resource="EMBL-CDS" id="ABY23184"/>
    </conflict>
</comment>
<accession>A9WNC8</accession>
<feature type="chain" id="PRO_0000339577" description="ATP synthase subunit beta">
    <location>
        <begin position="1"/>
        <end position="484"/>
    </location>
</feature>
<feature type="binding site" evidence="1">
    <location>
        <begin position="168"/>
        <end position="175"/>
    </location>
    <ligand>
        <name>ATP</name>
        <dbReference type="ChEBI" id="CHEBI:30616"/>
    </ligand>
</feature>
<proteinExistence type="inferred from homology"/>